<keyword id="KW-0002">3D-structure</keyword>
<keyword id="KW-0963">Cytoplasm</keyword>
<keyword id="KW-0238">DNA-binding</keyword>
<keyword id="KW-0287">Flowering</keyword>
<keyword id="KW-0341">Growth regulation</keyword>
<keyword id="KW-0539">Nucleus</keyword>
<keyword id="KW-1185">Reference proteome</keyword>
<keyword id="KW-0804">Transcription</keyword>
<keyword id="KW-0805">Transcription regulation</keyword>
<gene>
    <name type="primary">HD5</name>
    <name evidence="7" type="synonym">DTH8</name>
    <name evidence="8" type="synonym">GHD8</name>
    <name evidence="6" type="synonym">HAP3H</name>
    <name evidence="11" type="synonym">NFYB11</name>
    <name evidence="12" type="ordered locus">Os08g0174500</name>
    <name evidence="11" type="ordered locus">LOC_Os08g07740</name>
</gene>
<reference key="1">
    <citation type="submission" date="2003-10" db="EMBL/GenBank/DDBJ databases">
        <title>Hd5, a QTL controlling photoperiod sensitivity of rice, encodes a CAAT-box binding transcription factor.</title>
        <authorList>
            <person name="Yamanouchi U."/>
            <person name="Nonoue Y."/>
            <person name="Ashikari M."/>
            <person name="Lin H.X."/>
            <person name="Sasaki T."/>
            <person name="Yano M."/>
        </authorList>
    </citation>
    <scope>NUCLEOTIDE SEQUENCE [GENOMIC DNA / MRNA]</scope>
    <source>
        <strain>cv. Nipponbare</strain>
    </source>
</reference>
<reference key="2">
    <citation type="journal article" date="2008" name="Mol. Genet. Genomics">
        <title>Identification, characterization and interaction of HAP family genes in rice.</title>
        <authorList>
            <person name="Thirumurugan T."/>
            <person name="Ito Y."/>
            <person name="Kubo T."/>
            <person name="Serizawa A."/>
            <person name="Kurata N."/>
        </authorList>
    </citation>
    <scope>NUCLEOTIDE SEQUENCE [GENOMIC DNA]</scope>
    <source>
        <strain>cv. Nipponbare</strain>
    </source>
</reference>
<reference key="3">
    <citation type="journal article" date="2010" name="Plant Physiol.">
        <title>DTH8 suppresses flowering in rice, influencing plant height and yield potential simultaneously.</title>
        <authorList>
            <person name="Wei X."/>
            <person name="Xu J."/>
            <person name="Guo H."/>
            <person name="Jiang L."/>
            <person name="Chen S."/>
            <person name="Yu C."/>
            <person name="Zhou Z."/>
            <person name="Hu P."/>
            <person name="Zhai H."/>
            <person name="Wan J."/>
        </authorList>
    </citation>
    <scope>NUCLEOTIDE SEQUENCE [GENOMIC DNA]</scope>
    <scope>FUNCTION</scope>
    <scope>SUBCELLULAR LOCATION</scope>
    <scope>DISRUPTION PHENOTYPE</scope>
    <source>
        <strain>cv. Asominori</strain>
    </source>
</reference>
<reference key="4">
    <citation type="journal article" date="2013" name="Theor. Appl. Genet.">
        <title>Roles of the Hd5 gene controlling heading date for adaptation to the northern limits of rice cultivation.</title>
        <authorList>
            <person name="Fujino K."/>
            <person name="Yamanouchi U."/>
            <person name="Yano M."/>
        </authorList>
    </citation>
    <scope>NUCLEOTIDE SEQUENCE [GENOMIC DNA]</scope>
    <source>
        <strain>cv. Arroz da Terra</strain>
        <strain>cv. Dunghung Shali</strain>
        <strain>cv. Hoshinoyume</strain>
        <strain>cv. Italica Livorno</strain>
    </source>
</reference>
<reference key="5">
    <citation type="journal article" date="2005" name="Nature">
        <title>The map-based sequence of the rice genome.</title>
        <authorList>
            <consortium name="International rice genome sequencing project (IRGSP)"/>
        </authorList>
    </citation>
    <scope>NUCLEOTIDE SEQUENCE [LARGE SCALE GENOMIC DNA]</scope>
    <source>
        <strain>cv. Nipponbare</strain>
    </source>
</reference>
<reference key="6">
    <citation type="journal article" date="2008" name="Nucleic Acids Res.">
        <title>The rice annotation project database (RAP-DB): 2008 update.</title>
        <authorList>
            <consortium name="The rice annotation project (RAP)"/>
        </authorList>
    </citation>
    <scope>GENOME REANNOTATION</scope>
    <source>
        <strain>cv. Nipponbare</strain>
    </source>
</reference>
<reference key="7">
    <citation type="journal article" date="2013" name="Rice">
        <title>Improvement of the Oryza sativa Nipponbare reference genome using next generation sequence and optical map data.</title>
        <authorList>
            <person name="Kawahara Y."/>
            <person name="de la Bastide M."/>
            <person name="Hamilton J.P."/>
            <person name="Kanamori H."/>
            <person name="McCombie W.R."/>
            <person name="Ouyang S."/>
            <person name="Schwartz D.C."/>
            <person name="Tanaka T."/>
            <person name="Wu J."/>
            <person name="Zhou S."/>
            <person name="Childs K.L."/>
            <person name="Davidson R.M."/>
            <person name="Lin H."/>
            <person name="Quesada-Ocampo L."/>
            <person name="Vaillancourt B."/>
            <person name="Sakai H."/>
            <person name="Lee S.S."/>
            <person name="Kim J."/>
            <person name="Numa H."/>
            <person name="Itoh T."/>
            <person name="Buell C.R."/>
            <person name="Matsumoto T."/>
        </authorList>
    </citation>
    <scope>GENOME REANNOTATION</scope>
    <source>
        <strain>cv. Nipponbare</strain>
    </source>
</reference>
<reference key="8">
    <citation type="journal article" date="2011" name="Mol. Plant">
        <title>A major QTL, Ghd8, plays pleiotropic roles in regulating grain productivity, plant height, and heading date in rice.</title>
        <authorList>
            <person name="Yan W.H."/>
            <person name="Wang P."/>
            <person name="Chen H.X."/>
            <person name="Zhou H.J."/>
            <person name="Li Q.P."/>
            <person name="Wang C.R."/>
            <person name="Ding Z.H."/>
            <person name="Zhang Y.S."/>
            <person name="Yu S.B."/>
            <person name="Xing Y.Z."/>
            <person name="Zhang Q.F."/>
        </authorList>
    </citation>
    <scope>FUNCTION</scope>
    <scope>DISRUPTION PHENOTYPE</scope>
</reference>
<reference key="9">
    <citation type="journal article" date="2016" name="Planta">
        <title>OsNF-YC2 and OsNF-YC4 proteins inhibit flowering under long-day conditions in rice.</title>
        <authorList>
            <person name="Kim S.K."/>
            <person name="Park H.Y."/>
            <person name="Jang Y.H."/>
            <person name="Lee K.C."/>
            <person name="Chung Y.S."/>
            <person name="Lee J.H."/>
            <person name="Kim J.K."/>
        </authorList>
    </citation>
    <scope>INTERACTION WITH NFYC2; NFYC4 AND NFYC6</scope>
    <scope>SUBCELLULAR LOCATION</scope>
    <scope>INDUCTION</scope>
</reference>
<proteinExistence type="evidence at protein level"/>
<organism>
    <name type="scientific">Oryza sativa subsp. japonica</name>
    <name type="common">Rice</name>
    <dbReference type="NCBI Taxonomy" id="39947"/>
    <lineage>
        <taxon>Eukaryota</taxon>
        <taxon>Viridiplantae</taxon>
        <taxon>Streptophyta</taxon>
        <taxon>Embryophyta</taxon>
        <taxon>Tracheophyta</taxon>
        <taxon>Spermatophyta</taxon>
        <taxon>Magnoliopsida</taxon>
        <taxon>Liliopsida</taxon>
        <taxon>Poales</taxon>
        <taxon>Poaceae</taxon>
        <taxon>BOP clade</taxon>
        <taxon>Oryzoideae</taxon>
        <taxon>Oryzeae</taxon>
        <taxon>Oryzinae</taxon>
        <taxon>Oryza</taxon>
        <taxon>Oryza sativa</taxon>
    </lineage>
</organism>
<sequence length="297" mass="29811">MKSRKSYGHLLSPVGSPPLDNESGEAAAAAAAGGGGCGSSAGYVVYGGGGGGDSPAKEQDRFLPIANVSRIMKRSLPANAKISKESKETVQECVSEFISFVTGEASDKCQREKRKTINGDDLLWAMTTLGFEAYVGPLKSYLNRYREAEGEKADVLGGAGGAAAARHGEGGCCGGGGGGADGVVIDGHYPLAGGLSHSHHGHQQQDGGGDVGLMMGGGDAGVGYNAGAGSTTTAFYAPAATAASGNKAYCGGDGSRVMEFEGIGGEEESGGGGGGGERGFAGHLHGVQWFRLKRNTN</sequence>
<name>HD5_ORYSJ</name>
<dbReference type="EMBL" id="AB124650">
    <property type="protein sequence ID" value="BAF34522.1"/>
    <property type="molecule type" value="Genomic_DNA"/>
</dbReference>
<dbReference type="EMBL" id="AB124651">
    <property type="protein sequence ID" value="BAF34523.1"/>
    <property type="molecule type" value="mRNA"/>
</dbReference>
<dbReference type="EMBL" id="AB288039">
    <property type="protein sequence ID" value="BAF64447.1"/>
    <property type="molecule type" value="Genomic_DNA"/>
</dbReference>
<dbReference type="EMBL" id="HM775396">
    <property type="protein sequence ID" value="ADK62361.1"/>
    <property type="molecule type" value="Genomic_DNA"/>
</dbReference>
<dbReference type="EMBL" id="AB693200">
    <property type="protein sequence ID" value="BAL45947.1"/>
    <property type="molecule type" value="Genomic_DNA"/>
</dbReference>
<dbReference type="EMBL" id="AB693202">
    <property type="protein sequence ID" value="BAL45949.1"/>
    <property type="molecule type" value="Genomic_DNA"/>
</dbReference>
<dbReference type="EMBL" id="AB693203">
    <property type="protein sequence ID" value="BAL45950.1"/>
    <property type="molecule type" value="Genomic_DNA"/>
</dbReference>
<dbReference type="EMBL" id="AB693204">
    <property type="protein sequence ID" value="BAL45951.1"/>
    <property type="molecule type" value="Genomic_DNA"/>
</dbReference>
<dbReference type="EMBL" id="AP005164">
    <property type="status" value="NOT_ANNOTATED_CDS"/>
    <property type="molecule type" value="Genomic_DNA"/>
</dbReference>
<dbReference type="EMBL" id="AP008214">
    <property type="protein sequence ID" value="BAF23021.1"/>
    <property type="molecule type" value="Genomic_DNA"/>
</dbReference>
<dbReference type="EMBL" id="AP014964">
    <property type="protein sequence ID" value="BAT04049.1"/>
    <property type="molecule type" value="Genomic_DNA"/>
</dbReference>
<dbReference type="RefSeq" id="XP_015649101.1">
    <property type="nucleotide sequence ID" value="XM_015793615.1"/>
</dbReference>
<dbReference type="PDB" id="6R0L">
    <property type="method" value="X-ray"/>
    <property type="resolution" value="2.70 A"/>
    <property type="chains" value="A=60-147"/>
</dbReference>
<dbReference type="PDB" id="7C9O">
    <property type="method" value="X-ray"/>
    <property type="resolution" value="2.55 A"/>
    <property type="chains" value="B=54-147"/>
</dbReference>
<dbReference type="PDB" id="7C9P">
    <property type="method" value="X-ray"/>
    <property type="resolution" value="2.00 A"/>
    <property type="chains" value="A/C=54-147"/>
</dbReference>
<dbReference type="PDBsum" id="6R0L"/>
<dbReference type="PDBsum" id="7C9O"/>
<dbReference type="PDBsum" id="7C9P"/>
<dbReference type="SMR" id="Q0J7P4"/>
<dbReference type="FunCoup" id="Q0J7P4">
    <property type="interactions" value="426"/>
</dbReference>
<dbReference type="STRING" id="39947.Q0J7P4"/>
<dbReference type="PaxDb" id="39947-Q0J7P4"/>
<dbReference type="EnsemblPlants" id="Os08t0174500-01">
    <property type="protein sequence ID" value="Os08t0174500-01"/>
    <property type="gene ID" value="Os08g0174500"/>
</dbReference>
<dbReference type="Gramene" id="Os08t0174500-01">
    <property type="protein sequence ID" value="Os08t0174500-01"/>
    <property type="gene ID" value="Os08g0174500"/>
</dbReference>
<dbReference type="KEGG" id="dosa:Os08g0174500"/>
<dbReference type="eggNOG" id="KOG0869">
    <property type="taxonomic scope" value="Eukaryota"/>
</dbReference>
<dbReference type="HOGENOM" id="CLU_066247_0_0_1"/>
<dbReference type="InParanoid" id="Q0J7P4"/>
<dbReference type="OrthoDB" id="386949at2759"/>
<dbReference type="PlantReactome" id="R-OSA-8934108">
    <property type="pathway name" value="Short day regulated expression of florigens"/>
</dbReference>
<dbReference type="Proteomes" id="UP000000763">
    <property type="component" value="Chromosome 8"/>
</dbReference>
<dbReference type="Proteomes" id="UP000059680">
    <property type="component" value="Chromosome 8"/>
</dbReference>
<dbReference type="ExpressionAtlas" id="Q0J7P4">
    <property type="expression patterns" value="baseline and differential"/>
</dbReference>
<dbReference type="GO" id="GO:0016602">
    <property type="term" value="C:CCAAT-binding factor complex"/>
    <property type="evidence" value="ECO:0000318"/>
    <property type="project" value="GO_Central"/>
</dbReference>
<dbReference type="GO" id="GO:0005737">
    <property type="term" value="C:cytoplasm"/>
    <property type="evidence" value="ECO:0000314"/>
    <property type="project" value="UniProtKB"/>
</dbReference>
<dbReference type="GO" id="GO:0005634">
    <property type="term" value="C:nucleus"/>
    <property type="evidence" value="ECO:0000314"/>
    <property type="project" value="UniProtKB"/>
</dbReference>
<dbReference type="GO" id="GO:0001228">
    <property type="term" value="F:DNA-binding transcription activator activity, RNA polymerase II-specific"/>
    <property type="evidence" value="ECO:0007669"/>
    <property type="project" value="InterPro"/>
</dbReference>
<dbReference type="GO" id="GO:0000981">
    <property type="term" value="F:DNA-binding transcription factor activity, RNA polymerase II-specific"/>
    <property type="evidence" value="ECO:0000318"/>
    <property type="project" value="GO_Central"/>
</dbReference>
<dbReference type="GO" id="GO:0046982">
    <property type="term" value="F:protein heterodimerization activity"/>
    <property type="evidence" value="ECO:0007669"/>
    <property type="project" value="InterPro"/>
</dbReference>
<dbReference type="GO" id="GO:0043565">
    <property type="term" value="F:sequence-specific DNA binding"/>
    <property type="evidence" value="ECO:0007669"/>
    <property type="project" value="InterPro"/>
</dbReference>
<dbReference type="GO" id="GO:0009908">
    <property type="term" value="P:flower development"/>
    <property type="evidence" value="ECO:0007669"/>
    <property type="project" value="UniProtKB-KW"/>
</dbReference>
<dbReference type="GO" id="GO:0048579">
    <property type="term" value="P:negative regulation of long-day photoperiodism, flowering"/>
    <property type="evidence" value="ECO:0000315"/>
    <property type="project" value="UniProtKB"/>
</dbReference>
<dbReference type="GO" id="GO:0051512">
    <property type="term" value="P:positive regulation of unidimensional cell growth"/>
    <property type="evidence" value="ECO:0000315"/>
    <property type="project" value="UniProtKB"/>
</dbReference>
<dbReference type="GO" id="GO:0006357">
    <property type="term" value="P:regulation of transcription by RNA polymerase II"/>
    <property type="evidence" value="ECO:0000318"/>
    <property type="project" value="GO_Central"/>
</dbReference>
<dbReference type="CDD" id="cd22907">
    <property type="entry name" value="HFD_NFYB"/>
    <property type="match status" value="1"/>
</dbReference>
<dbReference type="FunFam" id="1.10.20.10:FF:000035">
    <property type="entry name" value="Nuclear transcription factor Y subunit B-3"/>
    <property type="match status" value="1"/>
</dbReference>
<dbReference type="Gene3D" id="1.10.20.10">
    <property type="entry name" value="Histone, subunit A"/>
    <property type="match status" value="1"/>
</dbReference>
<dbReference type="InterPro" id="IPR003958">
    <property type="entry name" value="CBFA_NFYB_domain"/>
</dbReference>
<dbReference type="InterPro" id="IPR009072">
    <property type="entry name" value="Histone-fold"/>
</dbReference>
<dbReference type="InterPro" id="IPR027113">
    <property type="entry name" value="Transc_fact_NFYB/HAP3"/>
</dbReference>
<dbReference type="InterPro" id="IPR003956">
    <property type="entry name" value="Transcrpt_fac_NFYB/HAP3_CS"/>
</dbReference>
<dbReference type="PANTHER" id="PTHR11064">
    <property type="entry name" value="CCAAT-BINDING TRANSCRIPTION FACTOR-RELATED"/>
    <property type="match status" value="1"/>
</dbReference>
<dbReference type="PANTHER" id="PTHR11064:SF150">
    <property type="entry name" value="NUCLEAR TRANSCRIPTION FACTOR Y SUBUNIT B-11"/>
    <property type="match status" value="1"/>
</dbReference>
<dbReference type="Pfam" id="PF00808">
    <property type="entry name" value="CBFD_NFYB_HMF"/>
    <property type="match status" value="1"/>
</dbReference>
<dbReference type="PRINTS" id="PR00615">
    <property type="entry name" value="CCAATSUBUNTA"/>
</dbReference>
<dbReference type="SUPFAM" id="SSF47113">
    <property type="entry name" value="Histone-fold"/>
    <property type="match status" value="1"/>
</dbReference>
<dbReference type="PROSITE" id="PS00685">
    <property type="entry name" value="NFYB_HAP3"/>
    <property type="match status" value="1"/>
</dbReference>
<feature type="chain" id="PRO_0000437431" description="Nuclear transcription factor Y subunit B-11">
    <location>
        <begin position="1"/>
        <end position="297"/>
    </location>
</feature>
<feature type="DNA-binding region" evidence="1">
    <location>
        <begin position="63"/>
        <end position="69"/>
    </location>
</feature>
<feature type="region of interest" description="Disordered" evidence="2">
    <location>
        <begin position="1"/>
        <end position="25"/>
    </location>
</feature>
<feature type="region of interest" description="Subunit association domain (SAD)" evidence="1">
    <location>
        <begin position="90"/>
        <end position="101"/>
    </location>
</feature>
<feature type="helix" evidence="13">
    <location>
        <begin position="65"/>
        <end position="74"/>
    </location>
</feature>
<feature type="helix" evidence="13">
    <location>
        <begin position="84"/>
        <end position="111"/>
    </location>
</feature>
<feature type="strand" evidence="13">
    <location>
        <begin position="115"/>
        <end position="117"/>
    </location>
</feature>
<feature type="helix" evidence="13">
    <location>
        <begin position="119"/>
        <end position="128"/>
    </location>
</feature>
<feature type="helix" evidence="13">
    <location>
        <begin position="132"/>
        <end position="146"/>
    </location>
</feature>
<protein>
    <recommendedName>
        <fullName evidence="11">Nuclear transcription factor Y subunit B-11</fullName>
        <shortName evidence="9">OsNF-YB11</shortName>
    </recommendedName>
    <alternativeName>
        <fullName evidence="7">Protein DAYS TO HEADING 8</fullName>
    </alternativeName>
    <alternativeName>
        <fullName evidence="10">Protein HEADING DATE 5</fullName>
    </alternativeName>
    <alternativeName>
        <fullName evidence="11">Transcriptional activator HAP3H</fullName>
        <shortName evidence="6">OsHAP3H</shortName>
    </alternativeName>
</protein>
<comment type="function">
    <text evidence="1 3 4">Probable transcription factor involved in the regulation of flowering time under long day (LD) conditions. Functions as a repressor of flowering, independently of HD1 and GHD7. Controls flowering time by negatively regulating the expression of EHD1 and HD3A (PubMed:20566706, PubMed:21148627). Regulates plant height by promoting cell elongation in the internodes (PubMed:20566706). Component of the NF-Y/HAP transcription factor complex (By similarity).</text>
</comment>
<comment type="subunit">
    <text evidence="1 5">Heterotrimeric transcription factor composed of three components, NF-YA, NF-YB and NF-YC. NF-YB and NF-YC must interact and dimerize for NF-YA association and DNA binding (By similarity). Interacts with NFYC2, NFYC4 and NFYC6 (PubMed:26542958).</text>
</comment>
<comment type="subcellular location">
    <subcellularLocation>
        <location evidence="3 5">Nucleus</location>
    </subcellularLocation>
    <subcellularLocation>
        <location evidence="5">Cytoplasm</location>
    </subcellularLocation>
</comment>
<comment type="tissue specificity">
    <text evidence="3">Expressed in roots, culms, nodes, leaf blades, leaf sheaths and young panicles.</text>
</comment>
<comment type="induction">
    <text evidence="5">Circadian-regulation under long day (LD) conditions. Expression increases in the middle of daytime, peaks around the end of the light period and gradually decreases during the dark period and beginning of daylight.</text>
</comment>
<comment type="disruption phenotype">
    <text evidence="3 4">Early flowering phenotype under long day (LD) and natural day (ND) conditions. Decreased plant size, number of grains per panicle, yield and dry weight per plant.</text>
</comment>
<comment type="similarity">
    <text evidence="11">Belongs to the NFYB/HAP3 subunit family.</text>
</comment>
<accession>Q0J7P4</accession>
<evidence type="ECO:0000250" key="1"/>
<evidence type="ECO:0000256" key="2">
    <source>
        <dbReference type="SAM" id="MobiDB-lite"/>
    </source>
</evidence>
<evidence type="ECO:0000269" key="3">
    <source>
    </source>
</evidence>
<evidence type="ECO:0000269" key="4">
    <source>
    </source>
</evidence>
<evidence type="ECO:0000269" key="5">
    <source>
    </source>
</evidence>
<evidence type="ECO:0000303" key="6">
    <source>
    </source>
</evidence>
<evidence type="ECO:0000303" key="7">
    <source>
    </source>
</evidence>
<evidence type="ECO:0000303" key="8">
    <source>
    </source>
</evidence>
<evidence type="ECO:0000303" key="9">
    <source>
    </source>
</evidence>
<evidence type="ECO:0000303" key="10">
    <source ref="1"/>
</evidence>
<evidence type="ECO:0000305" key="11"/>
<evidence type="ECO:0000312" key="12">
    <source>
        <dbReference type="EMBL" id="BAF23021.1"/>
    </source>
</evidence>
<evidence type="ECO:0007829" key="13">
    <source>
        <dbReference type="PDB" id="7C9P"/>
    </source>
</evidence>